<dbReference type="EMBL" id="AB009314">
    <property type="protein sequence ID" value="BAA23754.1"/>
    <property type="molecule type" value="Genomic_DNA"/>
</dbReference>
<dbReference type="RefSeq" id="WP_020916491.1">
    <property type="nucleotide sequence ID" value="NZ_FOLK01000002.1"/>
</dbReference>
<dbReference type="SMR" id="O50158"/>
<dbReference type="STRING" id="1335.A6J79_05340"/>
<dbReference type="OrthoDB" id="9812769at2"/>
<dbReference type="GO" id="GO:0005886">
    <property type="term" value="C:plasma membrane"/>
    <property type="evidence" value="ECO:0007669"/>
    <property type="project" value="UniProtKB-SubCell"/>
</dbReference>
<dbReference type="GO" id="GO:0045259">
    <property type="term" value="C:proton-transporting ATP synthase complex"/>
    <property type="evidence" value="ECO:0007669"/>
    <property type="project" value="UniProtKB-KW"/>
</dbReference>
<dbReference type="GO" id="GO:0005524">
    <property type="term" value="F:ATP binding"/>
    <property type="evidence" value="ECO:0007669"/>
    <property type="project" value="UniProtKB-UniRule"/>
</dbReference>
<dbReference type="GO" id="GO:0046933">
    <property type="term" value="F:proton-transporting ATP synthase activity, rotational mechanism"/>
    <property type="evidence" value="ECO:0007669"/>
    <property type="project" value="UniProtKB-UniRule"/>
</dbReference>
<dbReference type="GO" id="GO:0042777">
    <property type="term" value="P:proton motive force-driven plasma membrane ATP synthesis"/>
    <property type="evidence" value="ECO:0007669"/>
    <property type="project" value="UniProtKB-UniRule"/>
</dbReference>
<dbReference type="CDD" id="cd12151">
    <property type="entry name" value="F1-ATPase_gamma"/>
    <property type="match status" value="1"/>
</dbReference>
<dbReference type="FunFam" id="3.40.1380.10:FF:000002">
    <property type="entry name" value="ATP synthase gamma chain"/>
    <property type="match status" value="1"/>
</dbReference>
<dbReference type="Gene3D" id="3.40.1380.10">
    <property type="match status" value="1"/>
</dbReference>
<dbReference type="Gene3D" id="1.10.287.80">
    <property type="entry name" value="ATP synthase, gamma subunit, helix hairpin domain"/>
    <property type="match status" value="1"/>
</dbReference>
<dbReference type="HAMAP" id="MF_00815">
    <property type="entry name" value="ATP_synth_gamma_bact"/>
    <property type="match status" value="1"/>
</dbReference>
<dbReference type="InterPro" id="IPR035968">
    <property type="entry name" value="ATP_synth_F1_ATPase_gsu"/>
</dbReference>
<dbReference type="InterPro" id="IPR000131">
    <property type="entry name" value="ATP_synth_F1_gsu"/>
</dbReference>
<dbReference type="InterPro" id="IPR023632">
    <property type="entry name" value="ATP_synth_F1_gsu_CS"/>
</dbReference>
<dbReference type="NCBIfam" id="TIGR01146">
    <property type="entry name" value="ATPsyn_F1gamma"/>
    <property type="match status" value="1"/>
</dbReference>
<dbReference type="NCBIfam" id="NF004147">
    <property type="entry name" value="PRK05621.2-1"/>
    <property type="match status" value="1"/>
</dbReference>
<dbReference type="PANTHER" id="PTHR11693">
    <property type="entry name" value="ATP SYNTHASE GAMMA CHAIN"/>
    <property type="match status" value="1"/>
</dbReference>
<dbReference type="PANTHER" id="PTHR11693:SF22">
    <property type="entry name" value="ATP SYNTHASE SUBUNIT GAMMA, MITOCHONDRIAL"/>
    <property type="match status" value="1"/>
</dbReference>
<dbReference type="Pfam" id="PF00231">
    <property type="entry name" value="ATP-synt"/>
    <property type="match status" value="1"/>
</dbReference>
<dbReference type="PRINTS" id="PR00126">
    <property type="entry name" value="ATPASEGAMMA"/>
</dbReference>
<dbReference type="SUPFAM" id="SSF52943">
    <property type="entry name" value="ATP synthase (F1-ATPase), gamma subunit"/>
    <property type="match status" value="1"/>
</dbReference>
<dbReference type="PROSITE" id="PS00153">
    <property type="entry name" value="ATPASE_GAMMA"/>
    <property type="match status" value="1"/>
</dbReference>
<accession>O50158</accession>
<keyword id="KW-0066">ATP synthesis</keyword>
<keyword id="KW-1003">Cell membrane</keyword>
<keyword id="KW-0139">CF(1)</keyword>
<keyword id="KW-0375">Hydrogen ion transport</keyword>
<keyword id="KW-0406">Ion transport</keyword>
<keyword id="KW-0472">Membrane</keyword>
<keyword id="KW-0813">Transport</keyword>
<name>ATPG_STREI</name>
<sequence length="291" mass="31860">MAGSLSEIKGKIISTQKTSHITGAMQMVSAAKLTKSEQAAKDFQVYASKIRQITTDLLKSELVNGSKNPMLAARPVKKTGYIVITSDKGLVGGYNSKILKAMMDLIEEYHQDGNYAIIAIGGIGADFFKARGMNVVFELRGLEDQPSFEQVGNIIAKSVEMYKNELFDELYVCYNHHVNSLTSQVRVQQMLPIAELDADEAAEEGVSGFELEPNREMILEQLLPQYTESLIYGAIVDAKTAEHAAGMTAMQTATDNAKNVINDLTIQYNRARQAAITQEITEIVAGANALE</sequence>
<evidence type="ECO:0000255" key="1">
    <source>
        <dbReference type="HAMAP-Rule" id="MF_00815"/>
    </source>
</evidence>
<gene>
    <name evidence="1" type="primary">atpG</name>
</gene>
<proteinExistence type="inferred from homology"/>
<reference key="1">
    <citation type="submission" date="1997-11" db="EMBL/GenBank/DDBJ databases">
        <title>Sequence analysis of the gene coding proton-translocating ATPase of Streptococcus bovis.</title>
        <authorList>
            <person name="Umemori J."/>
            <person name="Miwa T."/>
            <person name="Nagamine T."/>
            <person name="Ogata K."/>
            <person name="Takenaka A."/>
            <person name="Hino T."/>
        </authorList>
    </citation>
    <scope>NUCLEOTIDE SEQUENCE [GENOMIC DNA]</scope>
    <source>
        <strain>ATCC 700410 / JB1</strain>
    </source>
</reference>
<comment type="function">
    <text evidence="1">Produces ATP from ADP in the presence of a proton gradient across the membrane. The gamma chain is believed to be important in regulating ATPase activity and the flow of protons through the CF(0) complex.</text>
</comment>
<comment type="subunit">
    <text evidence="1">F-type ATPases have 2 components, CF(1) - the catalytic core - and CF(0) - the membrane proton channel. CF(1) has five subunits: alpha(3), beta(3), gamma(1), delta(1), epsilon(1). CF(0) has three main subunits: a, b and c.</text>
</comment>
<comment type="subcellular location">
    <subcellularLocation>
        <location evidence="1">Cell membrane</location>
        <topology evidence="1">Peripheral membrane protein</topology>
    </subcellularLocation>
</comment>
<comment type="similarity">
    <text evidence="1">Belongs to the ATPase gamma chain family.</text>
</comment>
<organism>
    <name type="scientific">Streptococcus equinus</name>
    <name type="common">Streptococcus bovis</name>
    <dbReference type="NCBI Taxonomy" id="1335"/>
    <lineage>
        <taxon>Bacteria</taxon>
        <taxon>Bacillati</taxon>
        <taxon>Bacillota</taxon>
        <taxon>Bacilli</taxon>
        <taxon>Lactobacillales</taxon>
        <taxon>Streptococcaceae</taxon>
        <taxon>Streptococcus</taxon>
    </lineage>
</organism>
<protein>
    <recommendedName>
        <fullName evidence="1">ATP synthase gamma chain</fullName>
    </recommendedName>
    <alternativeName>
        <fullName evidence="1">ATP synthase F1 sector gamma subunit</fullName>
    </alternativeName>
    <alternativeName>
        <fullName evidence="1">F-ATPase gamma subunit</fullName>
    </alternativeName>
</protein>
<feature type="chain" id="PRO_0000073385" description="ATP synthase gamma chain">
    <location>
        <begin position="1"/>
        <end position="291"/>
    </location>
</feature>